<accession>Q9L7Z1</accession>
<protein>
    <recommendedName>
        <fullName>Chaperone protein DnaK</fullName>
    </recommendedName>
    <alternativeName>
        <fullName>HSP70</fullName>
    </alternativeName>
    <alternativeName>
        <fullName>Heat shock 70 kDa protein</fullName>
    </alternativeName>
    <alternativeName>
        <fullName>Heat shock protein 70</fullName>
    </alternativeName>
</protein>
<evidence type="ECO:0000250" key="1"/>
<evidence type="ECO:0000256" key="2">
    <source>
        <dbReference type="SAM" id="MobiDB-lite"/>
    </source>
</evidence>
<evidence type="ECO:0000305" key="3"/>
<reference key="1">
    <citation type="submission" date="1999-12" db="EMBL/GenBank/DDBJ databases">
        <title>DnaK from marine bacterium Vibrio proteolyticus: novel dnaK locus organization and the protein characterization.</title>
        <authorList>
            <person name="Galkin A."/>
            <person name="Yoshimune K."/>
            <person name="Kulakova L."/>
            <person name="Yoshimura T."/>
            <person name="Esaki N."/>
        </authorList>
    </citation>
    <scope>NUCLEOTIDE SEQUENCE [GENOMIC DNA]</scope>
</reference>
<name>DNAK_VIBPR</name>
<feature type="chain" id="PRO_0000078584" description="Chaperone protein DnaK">
    <location>
        <begin position="1"/>
        <end position="637"/>
    </location>
</feature>
<feature type="region of interest" description="Disordered" evidence="2">
    <location>
        <begin position="606"/>
        <end position="637"/>
    </location>
</feature>
<feature type="compositionally biased region" description="Low complexity" evidence="2">
    <location>
        <begin position="606"/>
        <end position="616"/>
    </location>
</feature>
<feature type="compositionally biased region" description="Acidic residues" evidence="2">
    <location>
        <begin position="623"/>
        <end position="637"/>
    </location>
</feature>
<feature type="modified residue" description="Phosphothreonine; by autocatalysis" evidence="1">
    <location>
        <position position="198"/>
    </location>
</feature>
<comment type="function">
    <text evidence="1">Acts as a chaperone.</text>
</comment>
<comment type="induction">
    <text evidence="1">By stress conditions e.g. heat shock (By similarity).</text>
</comment>
<comment type="similarity">
    <text evidence="3">Belongs to the heat shock protein 70 family.</text>
</comment>
<sequence length="637" mass="68987">MGKIIGIDLGTTNSCVAVLDGDKPRVIENAEGERTTASVIAYTDGETLVGQPAKRQAVTNPTNTLFAIKRLIGRRFEDEEVQRDIEIMPYKIVKADNGDAWVEAKGQKMAAPQVSAEVLKKMKKTAEDFLGEEVTGAVITVPAYFNDAQRQATKDAGRIAGLEVKRIINEPTAAALAYGLDKKGGDRTIAVYDLGGGTFDISIIEIDEVEGEKTFEVLATNGDTHLGGEDFDNRLINYLVDEFKKEQGIDLKTDPLAMQRVKEAAEKAKIELSFTSQTDVNLPYVTADATAPKHMNVKVTRAKLESLVEDLVQRSLEPLKVALADADLSVNDITDVILVGGQTRMPMVQAKVAEFFGKEARRDVNPDEAVAMGAAVQGGVLAGDVKDVLLLDVTPLSLGIETMGGVMTKLVEKNTTIPTKANQVFSTAEDNQSAVTIHVLQGERKQAMYNKSLGQFNLEGIQPAPRGMPQIEVTFDLDADGILHVSAKDKQTGKEQKITIQASGGLSDDEIEKMVQEAEANKEADKKFEELATARNQADQMIHGTRKQVEEAGDALPAEDKEKIEAAVSELEDARKGDDKEAIDAKVQALMTASQKLMEIAQQQAQAQAAQGGDEAAQSKDDDVVDAEFEEVKDDKK</sequence>
<dbReference type="EMBL" id="AF218211">
    <property type="protein sequence ID" value="AAF27648.1"/>
    <property type="molecule type" value="Genomic_DNA"/>
</dbReference>
<dbReference type="SMR" id="Q9L7Z1"/>
<dbReference type="GO" id="GO:0005524">
    <property type="term" value="F:ATP binding"/>
    <property type="evidence" value="ECO:0007669"/>
    <property type="project" value="UniProtKB-UniRule"/>
</dbReference>
<dbReference type="GO" id="GO:0140662">
    <property type="term" value="F:ATP-dependent protein folding chaperone"/>
    <property type="evidence" value="ECO:0007669"/>
    <property type="project" value="InterPro"/>
</dbReference>
<dbReference type="GO" id="GO:0051082">
    <property type="term" value="F:unfolded protein binding"/>
    <property type="evidence" value="ECO:0007669"/>
    <property type="project" value="InterPro"/>
</dbReference>
<dbReference type="CDD" id="cd10234">
    <property type="entry name" value="ASKHA_NBD_HSP70_DnaK-like"/>
    <property type="match status" value="1"/>
</dbReference>
<dbReference type="FunFam" id="2.60.34.10:FF:000014">
    <property type="entry name" value="Chaperone protein DnaK HSP70"/>
    <property type="match status" value="1"/>
</dbReference>
<dbReference type="FunFam" id="3.30.30.30:FF:000003">
    <property type="entry name" value="Heat shock protein 9"/>
    <property type="match status" value="1"/>
</dbReference>
<dbReference type="FunFam" id="1.20.1270.10:FF:000001">
    <property type="entry name" value="Molecular chaperone DnaK"/>
    <property type="match status" value="1"/>
</dbReference>
<dbReference type="FunFam" id="3.30.420.40:FF:000004">
    <property type="entry name" value="Molecular chaperone DnaK"/>
    <property type="match status" value="1"/>
</dbReference>
<dbReference type="FunFam" id="3.90.640.10:FF:000003">
    <property type="entry name" value="Molecular chaperone DnaK"/>
    <property type="match status" value="1"/>
</dbReference>
<dbReference type="Gene3D" id="1.20.1270.10">
    <property type="match status" value="1"/>
</dbReference>
<dbReference type="Gene3D" id="3.30.420.40">
    <property type="match status" value="2"/>
</dbReference>
<dbReference type="Gene3D" id="3.90.640.10">
    <property type="entry name" value="Actin, Chain A, domain 4"/>
    <property type="match status" value="1"/>
</dbReference>
<dbReference type="Gene3D" id="2.60.34.10">
    <property type="entry name" value="Substrate Binding Domain Of DNAk, Chain A, domain 1"/>
    <property type="match status" value="1"/>
</dbReference>
<dbReference type="HAMAP" id="MF_00332">
    <property type="entry name" value="DnaK"/>
    <property type="match status" value="1"/>
</dbReference>
<dbReference type="InterPro" id="IPR043129">
    <property type="entry name" value="ATPase_NBD"/>
</dbReference>
<dbReference type="InterPro" id="IPR012725">
    <property type="entry name" value="Chaperone_DnaK"/>
</dbReference>
<dbReference type="InterPro" id="IPR018181">
    <property type="entry name" value="Heat_shock_70_CS"/>
</dbReference>
<dbReference type="InterPro" id="IPR029048">
    <property type="entry name" value="HSP70_C_sf"/>
</dbReference>
<dbReference type="InterPro" id="IPR029047">
    <property type="entry name" value="HSP70_peptide-bd_sf"/>
</dbReference>
<dbReference type="InterPro" id="IPR013126">
    <property type="entry name" value="Hsp_70_fam"/>
</dbReference>
<dbReference type="NCBIfam" id="NF001413">
    <property type="entry name" value="PRK00290.1"/>
    <property type="match status" value="1"/>
</dbReference>
<dbReference type="NCBIfam" id="TIGR02350">
    <property type="entry name" value="prok_dnaK"/>
    <property type="match status" value="1"/>
</dbReference>
<dbReference type="PANTHER" id="PTHR19375">
    <property type="entry name" value="HEAT SHOCK PROTEIN 70KDA"/>
    <property type="match status" value="1"/>
</dbReference>
<dbReference type="Pfam" id="PF00012">
    <property type="entry name" value="HSP70"/>
    <property type="match status" value="1"/>
</dbReference>
<dbReference type="PRINTS" id="PR00301">
    <property type="entry name" value="HEATSHOCK70"/>
</dbReference>
<dbReference type="SUPFAM" id="SSF53067">
    <property type="entry name" value="Actin-like ATPase domain"/>
    <property type="match status" value="2"/>
</dbReference>
<dbReference type="SUPFAM" id="SSF100934">
    <property type="entry name" value="Heat shock protein 70kD (HSP70), C-terminal subdomain"/>
    <property type="match status" value="1"/>
</dbReference>
<dbReference type="SUPFAM" id="SSF100920">
    <property type="entry name" value="Heat shock protein 70kD (HSP70), peptide-binding domain"/>
    <property type="match status" value="1"/>
</dbReference>
<dbReference type="PROSITE" id="PS00297">
    <property type="entry name" value="HSP70_1"/>
    <property type="match status" value="1"/>
</dbReference>
<dbReference type="PROSITE" id="PS00329">
    <property type="entry name" value="HSP70_2"/>
    <property type="match status" value="1"/>
</dbReference>
<dbReference type="PROSITE" id="PS01036">
    <property type="entry name" value="HSP70_3"/>
    <property type="match status" value="1"/>
</dbReference>
<keyword id="KW-0067">ATP-binding</keyword>
<keyword id="KW-0143">Chaperone</keyword>
<keyword id="KW-0547">Nucleotide-binding</keyword>
<keyword id="KW-0597">Phosphoprotein</keyword>
<keyword id="KW-0346">Stress response</keyword>
<gene>
    <name type="primary">dnaK</name>
</gene>
<organism>
    <name type="scientific">Vibrio proteolyticus</name>
    <name type="common">Aeromonas proteolytica</name>
    <dbReference type="NCBI Taxonomy" id="671"/>
    <lineage>
        <taxon>Bacteria</taxon>
        <taxon>Pseudomonadati</taxon>
        <taxon>Pseudomonadota</taxon>
        <taxon>Gammaproteobacteria</taxon>
        <taxon>Vibrionales</taxon>
        <taxon>Vibrionaceae</taxon>
        <taxon>Vibrio</taxon>
    </lineage>
</organism>
<proteinExistence type="inferred from homology"/>